<feature type="chain" id="PRO_1000052842" description="Large ribosomal subunit protein uL5">
    <location>
        <begin position="1"/>
        <end position="180"/>
    </location>
</feature>
<keyword id="KW-0687">Ribonucleoprotein</keyword>
<keyword id="KW-0689">Ribosomal protein</keyword>
<keyword id="KW-0694">RNA-binding</keyword>
<keyword id="KW-0699">rRNA-binding</keyword>
<keyword id="KW-0820">tRNA-binding</keyword>
<gene>
    <name evidence="1" type="primary">rplE</name>
    <name type="ordered locus">MGAS10750_Spy0060</name>
</gene>
<evidence type="ECO:0000255" key="1">
    <source>
        <dbReference type="HAMAP-Rule" id="MF_01333"/>
    </source>
</evidence>
<evidence type="ECO:0000305" key="2"/>
<reference key="1">
    <citation type="journal article" date="2006" name="Proc. Natl. Acad. Sci. U.S.A.">
        <title>Molecular genetic anatomy of inter- and intraserotype variation in the human bacterial pathogen group A Streptococcus.</title>
        <authorList>
            <person name="Beres S.B."/>
            <person name="Richter E.W."/>
            <person name="Nagiec M.J."/>
            <person name="Sumby P."/>
            <person name="Porcella S.F."/>
            <person name="DeLeo F.R."/>
            <person name="Musser J.M."/>
        </authorList>
    </citation>
    <scope>NUCLEOTIDE SEQUENCE [LARGE SCALE GENOMIC DNA]</scope>
    <source>
        <strain>MGAS10750</strain>
    </source>
</reference>
<organism>
    <name type="scientific">Streptococcus pyogenes serotype M4 (strain MGAS10750)</name>
    <dbReference type="NCBI Taxonomy" id="370554"/>
    <lineage>
        <taxon>Bacteria</taxon>
        <taxon>Bacillati</taxon>
        <taxon>Bacillota</taxon>
        <taxon>Bacilli</taxon>
        <taxon>Lactobacillales</taxon>
        <taxon>Streptococcaceae</taxon>
        <taxon>Streptococcus</taxon>
    </lineage>
</organism>
<proteinExistence type="inferred from homology"/>
<protein>
    <recommendedName>
        <fullName evidence="1">Large ribosomal subunit protein uL5</fullName>
    </recommendedName>
    <alternativeName>
        <fullName evidence="2">50S ribosomal protein L5</fullName>
    </alternativeName>
</protein>
<sequence>MANRLKEKYTNEVIPALTEKFNYTSVMAVPKVEKIVLNMGVGDAVSNAKNLEKAAAELALISGQKPLITKAKKSIAGFRLREGVAIGAKVTLRGERMYEFLDKLVSVSLPRVRDFHGVPTKSFDGRGNYTLGVKEQLIFPEISFDDVDKVRGLDIVIVTTANTDEESRELLKGLGMPFAK</sequence>
<dbReference type="EMBL" id="CP000262">
    <property type="protein sequence ID" value="ABF37010.1"/>
    <property type="molecule type" value="Genomic_DNA"/>
</dbReference>
<dbReference type="SMR" id="Q1J901"/>
<dbReference type="KEGG" id="spi:MGAS10750_Spy0060"/>
<dbReference type="HOGENOM" id="CLU_061015_2_1_9"/>
<dbReference type="Proteomes" id="UP000002434">
    <property type="component" value="Chromosome"/>
</dbReference>
<dbReference type="GO" id="GO:1990904">
    <property type="term" value="C:ribonucleoprotein complex"/>
    <property type="evidence" value="ECO:0007669"/>
    <property type="project" value="UniProtKB-KW"/>
</dbReference>
<dbReference type="GO" id="GO:0005840">
    <property type="term" value="C:ribosome"/>
    <property type="evidence" value="ECO:0007669"/>
    <property type="project" value="UniProtKB-KW"/>
</dbReference>
<dbReference type="GO" id="GO:0019843">
    <property type="term" value="F:rRNA binding"/>
    <property type="evidence" value="ECO:0007669"/>
    <property type="project" value="UniProtKB-UniRule"/>
</dbReference>
<dbReference type="GO" id="GO:0003735">
    <property type="term" value="F:structural constituent of ribosome"/>
    <property type="evidence" value="ECO:0007669"/>
    <property type="project" value="InterPro"/>
</dbReference>
<dbReference type="GO" id="GO:0000049">
    <property type="term" value="F:tRNA binding"/>
    <property type="evidence" value="ECO:0007669"/>
    <property type="project" value="UniProtKB-UniRule"/>
</dbReference>
<dbReference type="GO" id="GO:0006412">
    <property type="term" value="P:translation"/>
    <property type="evidence" value="ECO:0007669"/>
    <property type="project" value="UniProtKB-UniRule"/>
</dbReference>
<dbReference type="FunFam" id="3.30.1440.10:FF:000001">
    <property type="entry name" value="50S ribosomal protein L5"/>
    <property type="match status" value="1"/>
</dbReference>
<dbReference type="Gene3D" id="3.30.1440.10">
    <property type="match status" value="1"/>
</dbReference>
<dbReference type="HAMAP" id="MF_01333_B">
    <property type="entry name" value="Ribosomal_uL5_B"/>
    <property type="match status" value="1"/>
</dbReference>
<dbReference type="InterPro" id="IPR002132">
    <property type="entry name" value="Ribosomal_uL5"/>
</dbReference>
<dbReference type="InterPro" id="IPR020930">
    <property type="entry name" value="Ribosomal_uL5_bac-type"/>
</dbReference>
<dbReference type="InterPro" id="IPR031309">
    <property type="entry name" value="Ribosomal_uL5_C"/>
</dbReference>
<dbReference type="InterPro" id="IPR020929">
    <property type="entry name" value="Ribosomal_uL5_CS"/>
</dbReference>
<dbReference type="InterPro" id="IPR022803">
    <property type="entry name" value="Ribosomal_uL5_dom_sf"/>
</dbReference>
<dbReference type="InterPro" id="IPR031310">
    <property type="entry name" value="Ribosomal_uL5_N"/>
</dbReference>
<dbReference type="NCBIfam" id="NF000585">
    <property type="entry name" value="PRK00010.1"/>
    <property type="match status" value="1"/>
</dbReference>
<dbReference type="PANTHER" id="PTHR11994">
    <property type="entry name" value="60S RIBOSOMAL PROTEIN L11-RELATED"/>
    <property type="match status" value="1"/>
</dbReference>
<dbReference type="Pfam" id="PF00281">
    <property type="entry name" value="Ribosomal_L5"/>
    <property type="match status" value="1"/>
</dbReference>
<dbReference type="Pfam" id="PF00673">
    <property type="entry name" value="Ribosomal_L5_C"/>
    <property type="match status" value="1"/>
</dbReference>
<dbReference type="PIRSF" id="PIRSF002161">
    <property type="entry name" value="Ribosomal_L5"/>
    <property type="match status" value="1"/>
</dbReference>
<dbReference type="SUPFAM" id="SSF55282">
    <property type="entry name" value="RL5-like"/>
    <property type="match status" value="1"/>
</dbReference>
<dbReference type="PROSITE" id="PS00358">
    <property type="entry name" value="RIBOSOMAL_L5"/>
    <property type="match status" value="1"/>
</dbReference>
<comment type="function">
    <text evidence="1">This is one of the proteins that bind and probably mediate the attachment of the 5S RNA into the large ribosomal subunit, where it forms part of the central protuberance. In the 70S ribosome it contacts protein S13 of the 30S subunit (bridge B1b), connecting the 2 subunits; this bridge is implicated in subunit movement. Contacts the P site tRNA; the 5S rRNA and some of its associated proteins might help stabilize positioning of ribosome-bound tRNAs.</text>
</comment>
<comment type="subunit">
    <text evidence="1">Part of the 50S ribosomal subunit; part of the 5S rRNA/L5/L18/L25 subcomplex. Contacts the 5S rRNA and the P site tRNA. Forms a bridge to the 30S subunit in the 70S ribosome.</text>
</comment>
<comment type="similarity">
    <text evidence="1">Belongs to the universal ribosomal protein uL5 family.</text>
</comment>
<name>RL5_STRPF</name>
<accession>Q1J901</accession>